<accession>P76641</accession>
<accession>Q2M9V7</accession>
<accession>Q46816</accession>
<proteinExistence type="evidence at protein level"/>
<comment type="function">
    <text evidence="2">Catalyzes the hydrolytic deamination of guanine, producing xanthine and ammonia.</text>
</comment>
<comment type="catalytic activity">
    <reaction evidence="2">
        <text>guanine + H2O + H(+) = xanthine + NH4(+)</text>
        <dbReference type="Rhea" id="RHEA:14665"/>
        <dbReference type="ChEBI" id="CHEBI:15377"/>
        <dbReference type="ChEBI" id="CHEBI:15378"/>
        <dbReference type="ChEBI" id="CHEBI:16235"/>
        <dbReference type="ChEBI" id="CHEBI:17712"/>
        <dbReference type="ChEBI" id="CHEBI:28938"/>
        <dbReference type="EC" id="3.5.4.3"/>
    </reaction>
    <physiologicalReaction direction="left-to-right" evidence="4">
        <dbReference type="Rhea" id="RHEA:14666"/>
    </physiologicalReaction>
</comment>
<comment type="cofactor">
    <cofactor>
        <name>Zn(2+)</name>
        <dbReference type="ChEBI" id="CHEBI:29105"/>
    </cofactor>
    <text>Binds 1 zinc ion per subunit.</text>
</comment>
<comment type="biophysicochemical properties">
    <kinetics>
        <KM evidence="2">15 uM for guanine</KM>
        <Vmax evidence="2">3.8 nmol/min/mg enzyme with guanine as substrate</Vmax>
    </kinetics>
</comment>
<comment type="pathway">
    <text evidence="4">Purine metabolism; guanine degradation; xanthine from guanine: step 1/1.</text>
</comment>
<comment type="similarity">
    <text evidence="3">Belongs to the metallo-dependent hydrolases superfamily. ATZ/TRZ family.</text>
</comment>
<reference key="1">
    <citation type="journal article" date="1997" name="Science">
        <title>The complete genome sequence of Escherichia coli K-12.</title>
        <authorList>
            <person name="Blattner F.R."/>
            <person name="Plunkett G. III"/>
            <person name="Bloch C.A."/>
            <person name="Perna N.T."/>
            <person name="Burland V."/>
            <person name="Riley M."/>
            <person name="Collado-Vides J."/>
            <person name="Glasner J.D."/>
            <person name="Rode C.K."/>
            <person name="Mayhew G.F."/>
            <person name="Gregor J."/>
            <person name="Davis N.W."/>
            <person name="Kirkpatrick H.A."/>
            <person name="Goeden M.A."/>
            <person name="Rose D.J."/>
            <person name="Mau B."/>
            <person name="Shao Y."/>
        </authorList>
    </citation>
    <scope>NUCLEOTIDE SEQUENCE [LARGE SCALE GENOMIC DNA]</scope>
    <source>
        <strain>K12 / MG1655 / ATCC 47076</strain>
    </source>
</reference>
<reference key="2">
    <citation type="journal article" date="2006" name="Mol. Syst. Biol.">
        <title>Highly accurate genome sequences of Escherichia coli K-12 strains MG1655 and W3110.</title>
        <authorList>
            <person name="Hayashi K."/>
            <person name="Morooka N."/>
            <person name="Yamamoto Y."/>
            <person name="Fujita K."/>
            <person name="Isono K."/>
            <person name="Choi S."/>
            <person name="Ohtsubo E."/>
            <person name="Baba T."/>
            <person name="Wanner B.L."/>
            <person name="Mori H."/>
            <person name="Horiuchi T."/>
        </authorList>
    </citation>
    <scope>NUCLEOTIDE SEQUENCE [LARGE SCALE GENOMIC DNA]</scope>
    <source>
        <strain>K12 / W3110 / ATCC 27325 / DSM 5911</strain>
    </source>
</reference>
<reference key="3">
    <citation type="journal article" date="2000" name="J. Bacteriol.">
        <title>Identification, expression, and characterization of Escherichia coli guanine deaminase.</title>
        <authorList>
            <person name="Maynes J.T."/>
            <person name="Yuan R.G."/>
            <person name="Snyder F.F."/>
        </authorList>
    </citation>
    <scope>FUNCTION</scope>
    <scope>CATALYTIC ACTIVITY</scope>
    <scope>BIOPHYSICOCHEMICAL PROPERTIES</scope>
</reference>
<name>GUAD_ECOLI</name>
<evidence type="ECO:0000250" key="1">
    <source>
        <dbReference type="UniProtKB" id="Q9Y2T3"/>
    </source>
</evidence>
<evidence type="ECO:0000269" key="2">
    <source>
    </source>
</evidence>
<evidence type="ECO:0000305" key="3"/>
<evidence type="ECO:0000305" key="4">
    <source>
    </source>
</evidence>
<evidence type="ECO:0007829" key="5">
    <source>
        <dbReference type="PDB" id="6OHB"/>
    </source>
</evidence>
<protein>
    <recommendedName>
        <fullName>Guanine deaminase</fullName>
        <shortName>Guanase</shortName>
        <shortName>Guanine aminase</shortName>
        <ecNumber evidence="2">3.5.4.3</ecNumber>
    </recommendedName>
    <alternativeName>
        <fullName>Guanine aminohydrolase</fullName>
        <shortName>GAH</shortName>
    </alternativeName>
</protein>
<dbReference type="EC" id="3.5.4.3" evidence="2"/>
<dbReference type="EMBL" id="U28375">
    <property type="protein sequence ID" value="AAA83064.1"/>
    <property type="molecule type" value="Genomic_DNA"/>
</dbReference>
<dbReference type="EMBL" id="U00096">
    <property type="protein sequence ID" value="AAC75921.1"/>
    <property type="molecule type" value="Genomic_DNA"/>
</dbReference>
<dbReference type="EMBL" id="AP009048">
    <property type="protein sequence ID" value="BAE76949.1"/>
    <property type="molecule type" value="Genomic_DNA"/>
</dbReference>
<dbReference type="PIR" id="C65072">
    <property type="entry name" value="C65072"/>
</dbReference>
<dbReference type="RefSeq" id="NP_417359.1">
    <property type="nucleotide sequence ID" value="NC_000913.3"/>
</dbReference>
<dbReference type="PDB" id="6OHB">
    <property type="method" value="X-ray"/>
    <property type="resolution" value="2.30 A"/>
    <property type="chains" value="A/B/C/D=1-439"/>
</dbReference>
<dbReference type="PDB" id="6OHC">
    <property type="method" value="X-ray"/>
    <property type="resolution" value="2.30 A"/>
    <property type="chains" value="A/B/C/D=1-439"/>
</dbReference>
<dbReference type="PDBsum" id="6OHB"/>
<dbReference type="PDBsum" id="6OHC"/>
<dbReference type="SMR" id="P76641"/>
<dbReference type="BioGRID" id="4259227">
    <property type="interactions" value="18"/>
</dbReference>
<dbReference type="BioGRID" id="851689">
    <property type="interactions" value="1"/>
</dbReference>
<dbReference type="FunCoup" id="P76641">
    <property type="interactions" value="602"/>
</dbReference>
<dbReference type="STRING" id="511145.b2883"/>
<dbReference type="jPOST" id="P76641"/>
<dbReference type="PaxDb" id="511145-b2883"/>
<dbReference type="EnsemblBacteria" id="AAC75921">
    <property type="protein sequence ID" value="AAC75921"/>
    <property type="gene ID" value="b2883"/>
</dbReference>
<dbReference type="GeneID" id="947366"/>
<dbReference type="KEGG" id="ecj:JW5466"/>
<dbReference type="KEGG" id="eco:b2883"/>
<dbReference type="PATRIC" id="fig|511145.12.peg.2976"/>
<dbReference type="EchoBASE" id="EB2878"/>
<dbReference type="eggNOG" id="COG0402">
    <property type="taxonomic scope" value="Bacteria"/>
</dbReference>
<dbReference type="HOGENOM" id="CLU_012358_0_2_6"/>
<dbReference type="InParanoid" id="P76641"/>
<dbReference type="OMA" id="CVHMNDS"/>
<dbReference type="PhylomeDB" id="P76641"/>
<dbReference type="BioCyc" id="EcoCyc:G7502-MONOMER"/>
<dbReference type="BioCyc" id="MetaCyc:G7502-MONOMER"/>
<dbReference type="BRENDA" id="3.5.4.3">
    <property type="organism ID" value="2026"/>
</dbReference>
<dbReference type="UniPathway" id="UPA00603">
    <property type="reaction ID" value="UER00660"/>
</dbReference>
<dbReference type="PRO" id="PR:P76641"/>
<dbReference type="Proteomes" id="UP000000625">
    <property type="component" value="Chromosome"/>
</dbReference>
<dbReference type="GO" id="GO:0005829">
    <property type="term" value="C:cytosol"/>
    <property type="evidence" value="ECO:0000318"/>
    <property type="project" value="GO_Central"/>
</dbReference>
<dbReference type="GO" id="GO:0018756">
    <property type="term" value="F:ammeline aminohydrolase activity"/>
    <property type="evidence" value="ECO:0000315"/>
    <property type="project" value="EcoCyc"/>
</dbReference>
<dbReference type="GO" id="GO:0008892">
    <property type="term" value="F:guanine deaminase activity"/>
    <property type="evidence" value="ECO:0000314"/>
    <property type="project" value="EcoCyc"/>
</dbReference>
<dbReference type="GO" id="GO:0008270">
    <property type="term" value="F:zinc ion binding"/>
    <property type="evidence" value="ECO:0000314"/>
    <property type="project" value="EcoCyc"/>
</dbReference>
<dbReference type="GO" id="GO:0006147">
    <property type="term" value="P:guanine catabolic process"/>
    <property type="evidence" value="ECO:0007669"/>
    <property type="project" value="UniProtKB-UniPathway"/>
</dbReference>
<dbReference type="GO" id="GO:0046098">
    <property type="term" value="P:guanine metabolic process"/>
    <property type="evidence" value="ECO:0000318"/>
    <property type="project" value="GO_Central"/>
</dbReference>
<dbReference type="CDD" id="cd01303">
    <property type="entry name" value="GDEase"/>
    <property type="match status" value="1"/>
</dbReference>
<dbReference type="FunFam" id="3.20.20.140:FF:000022">
    <property type="entry name" value="Guanine deaminase"/>
    <property type="match status" value="1"/>
</dbReference>
<dbReference type="Gene3D" id="3.20.20.140">
    <property type="entry name" value="Metal-dependent hydrolases"/>
    <property type="match status" value="1"/>
</dbReference>
<dbReference type="Gene3D" id="2.30.40.10">
    <property type="entry name" value="Urease, subunit C, domain 1"/>
    <property type="match status" value="1"/>
</dbReference>
<dbReference type="InterPro" id="IPR006680">
    <property type="entry name" value="Amidohydro-rel"/>
</dbReference>
<dbReference type="InterPro" id="IPR014311">
    <property type="entry name" value="Guanine_deaminase"/>
</dbReference>
<dbReference type="InterPro" id="IPR011059">
    <property type="entry name" value="Metal-dep_hydrolase_composite"/>
</dbReference>
<dbReference type="InterPro" id="IPR032466">
    <property type="entry name" value="Metal_Hydrolase"/>
</dbReference>
<dbReference type="InterPro" id="IPR051607">
    <property type="entry name" value="Metallo-dep_hydrolases"/>
</dbReference>
<dbReference type="NCBIfam" id="TIGR02967">
    <property type="entry name" value="guan_deamin"/>
    <property type="match status" value="1"/>
</dbReference>
<dbReference type="NCBIfam" id="NF006679">
    <property type="entry name" value="PRK09228.1"/>
    <property type="match status" value="1"/>
</dbReference>
<dbReference type="PANTHER" id="PTHR11271">
    <property type="entry name" value="GUANINE DEAMINASE"/>
    <property type="match status" value="1"/>
</dbReference>
<dbReference type="PANTHER" id="PTHR11271:SF6">
    <property type="entry name" value="GUANINE DEAMINASE"/>
    <property type="match status" value="1"/>
</dbReference>
<dbReference type="Pfam" id="PF01979">
    <property type="entry name" value="Amidohydro_1"/>
    <property type="match status" value="1"/>
</dbReference>
<dbReference type="SUPFAM" id="SSF51338">
    <property type="entry name" value="Composite domain of metallo-dependent hydrolases"/>
    <property type="match status" value="1"/>
</dbReference>
<dbReference type="SUPFAM" id="SSF51556">
    <property type="entry name" value="Metallo-dependent hydrolases"/>
    <property type="match status" value="1"/>
</dbReference>
<keyword id="KW-0002">3D-structure</keyword>
<keyword id="KW-0378">Hydrolase</keyword>
<keyword id="KW-0479">Metal-binding</keyword>
<keyword id="KW-1185">Reference proteome</keyword>
<keyword id="KW-0862">Zinc</keyword>
<feature type="chain" id="PRO_0000122297" description="Guanine deaminase">
    <location>
        <begin position="1"/>
        <end position="439"/>
    </location>
</feature>
<feature type="binding site" evidence="1">
    <location>
        <position position="82"/>
    </location>
    <ligand>
        <name>Zn(2+)</name>
        <dbReference type="ChEBI" id="CHEBI:29105"/>
    </ligand>
</feature>
<feature type="binding site" evidence="1">
    <location>
        <begin position="84"/>
        <end position="87"/>
    </location>
    <ligand>
        <name>substrate</name>
    </ligand>
</feature>
<feature type="binding site" evidence="1">
    <location>
        <position position="84"/>
    </location>
    <ligand>
        <name>Zn(2+)</name>
        <dbReference type="ChEBI" id="CHEBI:29105"/>
    </ligand>
</feature>
<feature type="binding site" evidence="1">
    <location>
        <begin position="209"/>
        <end position="210"/>
    </location>
    <ligand>
        <name>substrate</name>
    </ligand>
</feature>
<feature type="binding site" evidence="1">
    <location>
        <begin position="237"/>
        <end position="240"/>
    </location>
    <ligand>
        <name>substrate</name>
    </ligand>
</feature>
<feature type="binding site" evidence="1">
    <location>
        <position position="237"/>
    </location>
    <ligand>
        <name>Zn(2+)</name>
        <dbReference type="ChEBI" id="CHEBI:29105"/>
    </ligand>
</feature>
<feature type="binding site" evidence="1">
    <location>
        <position position="327"/>
    </location>
    <ligand>
        <name>substrate</name>
    </ligand>
</feature>
<feature type="binding site" evidence="1">
    <location>
        <position position="327"/>
    </location>
    <ligand>
        <name>Zn(2+)</name>
        <dbReference type="ChEBI" id="CHEBI:29105"/>
    </ligand>
</feature>
<feature type="strand" evidence="5">
    <location>
        <begin position="8"/>
        <end position="18"/>
    </location>
</feature>
<feature type="helix" evidence="5">
    <location>
        <begin position="25"/>
        <end position="27"/>
    </location>
</feature>
<feature type="helix" evidence="5">
    <location>
        <begin position="29"/>
        <end position="31"/>
    </location>
</feature>
<feature type="strand" evidence="5">
    <location>
        <begin position="32"/>
        <end position="43"/>
    </location>
</feature>
<feature type="strand" evidence="5">
    <location>
        <begin position="46"/>
        <end position="52"/>
    </location>
</feature>
<feature type="helix" evidence="5">
    <location>
        <begin position="53"/>
        <end position="56"/>
    </location>
</feature>
<feature type="helix" evidence="5">
    <location>
        <begin position="57"/>
        <end position="59"/>
    </location>
</feature>
<feature type="strand" evidence="5">
    <location>
        <begin position="67"/>
        <end position="76"/>
    </location>
</feature>
<feature type="strand" evidence="5">
    <location>
        <begin position="78"/>
        <end position="84"/>
    </location>
</feature>
<feature type="helix" evidence="5">
    <location>
        <begin position="85"/>
        <end position="87"/>
    </location>
</feature>
<feature type="helix" evidence="5">
    <location>
        <begin position="98"/>
        <end position="104"/>
    </location>
</feature>
<feature type="helix" evidence="5">
    <location>
        <begin position="106"/>
        <end position="111"/>
    </location>
</feature>
<feature type="helix" evidence="5">
    <location>
        <begin position="112"/>
        <end position="114"/>
    </location>
</feature>
<feature type="helix" evidence="5">
    <location>
        <begin position="116"/>
        <end position="132"/>
    </location>
</feature>
<feature type="strand" evidence="5">
    <location>
        <begin position="135"/>
        <end position="141"/>
    </location>
</feature>
<feature type="helix" evidence="5">
    <location>
        <begin position="146"/>
        <end position="158"/>
    </location>
</feature>
<feature type="strand" evidence="5">
    <location>
        <begin position="164"/>
        <end position="166"/>
    </location>
</feature>
<feature type="strand" evidence="5">
    <location>
        <begin position="172"/>
        <end position="174"/>
    </location>
</feature>
<feature type="helix" evidence="5">
    <location>
        <begin position="176"/>
        <end position="178"/>
    </location>
</feature>
<feature type="helix" evidence="5">
    <location>
        <begin position="182"/>
        <end position="196"/>
    </location>
</feature>
<feature type="strand" evidence="5">
    <location>
        <begin position="203"/>
        <end position="208"/>
    </location>
</feature>
<feature type="helix" evidence="5">
    <location>
        <begin position="211"/>
        <end position="213"/>
    </location>
</feature>
<feature type="helix" evidence="5">
    <location>
        <begin position="216"/>
        <end position="228"/>
    </location>
</feature>
<feature type="strand" evidence="5">
    <location>
        <begin position="232"/>
        <end position="239"/>
    </location>
</feature>
<feature type="helix" evidence="5">
    <location>
        <begin position="242"/>
        <end position="251"/>
    </location>
</feature>
<feature type="strand" evidence="5">
    <location>
        <begin position="255"/>
        <end position="257"/>
    </location>
</feature>
<feature type="helix" evidence="5">
    <location>
        <begin position="258"/>
        <end position="264"/>
    </location>
</feature>
<feature type="strand" evidence="5">
    <location>
        <begin position="272"/>
        <end position="276"/>
    </location>
</feature>
<feature type="helix" evidence="5">
    <location>
        <begin position="282"/>
        <end position="290"/>
    </location>
</feature>
<feature type="strand" evidence="5">
    <location>
        <begin position="294"/>
        <end position="297"/>
    </location>
</feature>
<feature type="helix" evidence="5">
    <location>
        <begin position="299"/>
        <end position="304"/>
    </location>
</feature>
<feature type="helix" evidence="5">
    <location>
        <begin position="312"/>
        <end position="317"/>
    </location>
</feature>
<feature type="strand" evidence="5">
    <location>
        <begin position="321"/>
        <end position="324"/>
    </location>
</feature>
<feature type="helix" evidence="5">
    <location>
        <begin position="336"/>
        <end position="349"/>
    </location>
</feature>
<feature type="helix" evidence="5">
    <location>
        <begin position="356"/>
        <end position="363"/>
    </location>
</feature>
<feature type="helix" evidence="5">
    <location>
        <begin position="365"/>
        <end position="370"/>
    </location>
</feature>
<feature type="turn" evidence="5">
    <location>
        <begin position="374"/>
        <end position="376"/>
    </location>
</feature>
<feature type="strand" evidence="5">
    <location>
        <begin position="377"/>
        <end position="379"/>
    </location>
</feature>
<feature type="strand" evidence="5">
    <location>
        <begin position="388"/>
        <end position="391"/>
    </location>
</feature>
<feature type="helix" evidence="5">
    <location>
        <begin position="397"/>
        <end position="404"/>
    </location>
</feature>
<feature type="helix" evidence="5">
    <location>
        <begin position="409"/>
        <end position="419"/>
    </location>
</feature>
<feature type="helix" evidence="5">
    <location>
        <begin position="422"/>
        <end position="424"/>
    </location>
</feature>
<feature type="strand" evidence="5">
    <location>
        <begin position="425"/>
        <end position="430"/>
    </location>
</feature>
<feature type="strand" evidence="5">
    <location>
        <begin position="433"/>
        <end position="437"/>
    </location>
</feature>
<sequence length="439" mass="50244">MMSGEHTLKAVRGSFIDVTRTIDNPEEIASALRFIEDGLLLIKQGKVEWFGEWENGKHQIPDTIRVRDYRGKLIVPGFVDTHIHYPQSEMVGAYGEQLLEWLNKHTFPTERRYEDLEYAREMSAFFIKQLLRNGTTTALVFGTVHPQSVDALFEAASHINMRMIAGKVMMDRNAPDYLLDTAESSYHQSKELIERWHKNGRLLYAITPRFAPTSSPEQMAMAQRLKEEYPDTWVHTHLCENKDEIAWVKSLYPDHDGYLDVYHQYGLTGKNCVFAHCVHLEEKEWDRLSETKSSIAFCPTSNLYLGSGLFNLKKAWQKKVKVGMGTDIGAGTTFNMLQTLNEAYKVLQLQGYRLSAYEAFYLATLGGAKSLGLDDLIGNFLPGKEADFVVMEPTATPLQQLRYDNSVSLVDKLFVMMTLGDDRSIYRTYVDGRLVYERN</sequence>
<organism>
    <name type="scientific">Escherichia coli (strain K12)</name>
    <dbReference type="NCBI Taxonomy" id="83333"/>
    <lineage>
        <taxon>Bacteria</taxon>
        <taxon>Pseudomonadati</taxon>
        <taxon>Pseudomonadota</taxon>
        <taxon>Gammaproteobacteria</taxon>
        <taxon>Enterobacterales</taxon>
        <taxon>Enterobacteriaceae</taxon>
        <taxon>Escherichia</taxon>
    </lineage>
</organism>
<gene>
    <name type="primary">guaD</name>
    <name type="synonym">ygfP</name>
    <name type="ordered locus">b2883</name>
    <name type="ordered locus">JW5466</name>
</gene>